<name>SRBB_ASPFU</name>
<keyword id="KW-0175">Coiled coil</keyword>
<keyword id="KW-0539">Nucleus</keyword>
<keyword id="KW-1185">Reference proteome</keyword>
<keyword id="KW-0804">Transcription</keyword>
<keyword id="KW-0805">Transcription regulation</keyword>
<comment type="function">
    <text evidence="4">Key transcription factors critical for hypoxia adaptation and virulence (PubMed:25375670). Plays a major role in regulation of heme biosynthesis and carbohydrate metabolism early in the response to hypoxia (PubMed:25375670).</text>
</comment>
<comment type="subcellular location">
    <subcellularLocation>
        <location evidence="2">Nucleus</location>
    </subcellularLocation>
</comment>
<comment type="induction">
    <text evidence="4">Expression is positively regulated by the transcription factor srbA.</text>
</comment>
<comment type="disruption phenotype">
    <text evidence="4">Impairs growth in a hypoxic environment and subsequent virulence.</text>
</comment>
<gene>
    <name evidence="5" type="primary">srbB</name>
    <name type="ORF">AFUA_4G03460</name>
</gene>
<dbReference type="EMBL" id="AAHF01000016">
    <property type="protein sequence ID" value="EAL84495.1"/>
    <property type="molecule type" value="Genomic_DNA"/>
</dbReference>
<dbReference type="RefSeq" id="XP_746533.1">
    <property type="nucleotide sequence ID" value="XM_741440.1"/>
</dbReference>
<dbReference type="SMR" id="Q4W9W8"/>
<dbReference type="STRING" id="330879.Q4W9W8"/>
<dbReference type="EnsemblFungi" id="EAL84495">
    <property type="protein sequence ID" value="EAL84495"/>
    <property type="gene ID" value="AFUA_4G03460"/>
</dbReference>
<dbReference type="GeneID" id="3504075"/>
<dbReference type="KEGG" id="afm:AFUA_4G03460"/>
<dbReference type="VEuPathDB" id="FungiDB:Afu4g03460"/>
<dbReference type="eggNOG" id="KOG2588">
    <property type="taxonomic scope" value="Eukaryota"/>
</dbReference>
<dbReference type="HOGENOM" id="CLU_933761_0_0_1"/>
<dbReference type="InParanoid" id="Q4W9W8"/>
<dbReference type="OMA" id="ANWSYDN"/>
<dbReference type="OrthoDB" id="2133190at2759"/>
<dbReference type="Proteomes" id="UP000002530">
    <property type="component" value="Chromosome 4"/>
</dbReference>
<dbReference type="GO" id="GO:0000785">
    <property type="term" value="C:chromatin"/>
    <property type="evidence" value="ECO:0000318"/>
    <property type="project" value="GO_Central"/>
</dbReference>
<dbReference type="GO" id="GO:0005634">
    <property type="term" value="C:nucleus"/>
    <property type="evidence" value="ECO:0000318"/>
    <property type="project" value="GO_Central"/>
</dbReference>
<dbReference type="GO" id="GO:0001216">
    <property type="term" value="F:DNA-binding transcription activator activity"/>
    <property type="evidence" value="ECO:0000318"/>
    <property type="project" value="GO_Central"/>
</dbReference>
<dbReference type="GO" id="GO:0046983">
    <property type="term" value="F:protein dimerization activity"/>
    <property type="evidence" value="ECO:0007669"/>
    <property type="project" value="InterPro"/>
</dbReference>
<dbReference type="GO" id="GO:0000978">
    <property type="term" value="F:RNA polymerase II cis-regulatory region sequence-specific DNA binding"/>
    <property type="evidence" value="ECO:0000318"/>
    <property type="project" value="GO_Central"/>
</dbReference>
<dbReference type="GO" id="GO:0071456">
    <property type="term" value="P:cellular response to hypoxia"/>
    <property type="evidence" value="ECO:0000315"/>
    <property type="project" value="AspGD"/>
</dbReference>
<dbReference type="GO" id="GO:0045944">
    <property type="term" value="P:positive regulation of transcription by RNA polymerase II"/>
    <property type="evidence" value="ECO:0000318"/>
    <property type="project" value="GO_Central"/>
</dbReference>
<dbReference type="CDD" id="cd11395">
    <property type="entry name" value="bHLHzip_SREBP_like"/>
    <property type="match status" value="1"/>
</dbReference>
<dbReference type="Gene3D" id="4.10.280.10">
    <property type="entry name" value="Helix-loop-helix DNA-binding domain"/>
    <property type="match status" value="1"/>
</dbReference>
<dbReference type="InterPro" id="IPR011598">
    <property type="entry name" value="bHLH_dom"/>
</dbReference>
<dbReference type="InterPro" id="IPR036638">
    <property type="entry name" value="HLH_DNA-bd_sf"/>
</dbReference>
<dbReference type="InterPro" id="IPR052099">
    <property type="entry name" value="Regulatory_TF_Diverse"/>
</dbReference>
<dbReference type="PANTHER" id="PTHR47336:SF4">
    <property type="entry name" value="BHLH TRANSCRIPTION FACTOR (EUROFUNG)"/>
    <property type="match status" value="1"/>
</dbReference>
<dbReference type="PANTHER" id="PTHR47336">
    <property type="entry name" value="TRANSCRIPTION FACTOR HMS1-RELATED"/>
    <property type="match status" value="1"/>
</dbReference>
<dbReference type="Pfam" id="PF00010">
    <property type="entry name" value="HLH"/>
    <property type="match status" value="1"/>
</dbReference>
<dbReference type="SMART" id="SM00353">
    <property type="entry name" value="HLH"/>
    <property type="match status" value="1"/>
</dbReference>
<dbReference type="SUPFAM" id="SSF47459">
    <property type="entry name" value="HLH, helix-loop-helix DNA-binding domain"/>
    <property type="match status" value="1"/>
</dbReference>
<dbReference type="PROSITE" id="PS50888">
    <property type="entry name" value="BHLH"/>
    <property type="match status" value="1"/>
</dbReference>
<feature type="chain" id="PRO_0000460151" description="Transcription factor srbB">
    <location>
        <begin position="1"/>
        <end position="299"/>
    </location>
</feature>
<feature type="domain" description="bHLH" evidence="2">
    <location>
        <begin position="203"/>
        <end position="264"/>
    </location>
</feature>
<feature type="region of interest" description="Disordered" evidence="3">
    <location>
        <begin position="1"/>
        <end position="33"/>
    </location>
</feature>
<feature type="region of interest" description="Disordered" evidence="3">
    <location>
        <begin position="81"/>
        <end position="204"/>
    </location>
</feature>
<feature type="region of interest" description="Basic motif" evidence="2">
    <location>
        <begin position="203"/>
        <end position="216"/>
    </location>
</feature>
<feature type="region of interest" description="Helix-loop-helix motif" evidence="2">
    <location>
        <begin position="217"/>
        <end position="264"/>
    </location>
</feature>
<feature type="coiled-coil region" evidence="1">
    <location>
        <begin position="254"/>
        <end position="281"/>
    </location>
</feature>
<feature type="compositionally biased region" description="Low complexity" evidence="3">
    <location>
        <begin position="161"/>
        <end position="170"/>
    </location>
</feature>
<feature type="compositionally biased region" description="Polar residues" evidence="3">
    <location>
        <begin position="188"/>
        <end position="199"/>
    </location>
</feature>
<evidence type="ECO:0000255" key="1"/>
<evidence type="ECO:0000255" key="2">
    <source>
        <dbReference type="PROSITE-ProRule" id="PRU00981"/>
    </source>
</evidence>
<evidence type="ECO:0000256" key="3">
    <source>
        <dbReference type="SAM" id="MobiDB-lite"/>
    </source>
</evidence>
<evidence type="ECO:0000269" key="4">
    <source>
    </source>
</evidence>
<evidence type="ECO:0000303" key="5">
    <source>
    </source>
</evidence>
<sequence>MAYNNRPDASTAFTFDNDDRFVNQQPKGPDPLSANWSYDSAIDLFSLNTMLPETFPLDIPNDMLLDPKDFPTDLFAPPADISGFAISHSGEDSLSSDQESEDQPWSPAYRVSSLDSTTPDAPTVSPRSTEKPATRRRTTTQKREQATRWSSSPEMTPQEYPVTSQATTSPAPAPVSPPAASTSRKNSRSLSTDSQTATGRNAAKRAAHNIIEKRYRTNMNAKFVALEKAMSGSGVQKPTKGGSGPASLKKSEILTNAIAYMQELQDQNAALQKELALLKQNLLPGGLWRHNKENDKFRT</sequence>
<accession>Q4W9W8</accession>
<proteinExistence type="evidence at transcript level"/>
<reference key="1">
    <citation type="journal article" date="2005" name="Nature">
        <title>Genomic sequence of the pathogenic and allergenic filamentous fungus Aspergillus fumigatus.</title>
        <authorList>
            <person name="Nierman W.C."/>
            <person name="Pain A."/>
            <person name="Anderson M.J."/>
            <person name="Wortman J.R."/>
            <person name="Kim H.S."/>
            <person name="Arroyo J."/>
            <person name="Berriman M."/>
            <person name="Abe K."/>
            <person name="Archer D.B."/>
            <person name="Bermejo C."/>
            <person name="Bennett J.W."/>
            <person name="Bowyer P."/>
            <person name="Chen D."/>
            <person name="Collins M."/>
            <person name="Coulsen R."/>
            <person name="Davies R."/>
            <person name="Dyer P.S."/>
            <person name="Farman M.L."/>
            <person name="Fedorova N."/>
            <person name="Fedorova N.D."/>
            <person name="Feldblyum T.V."/>
            <person name="Fischer R."/>
            <person name="Fosker N."/>
            <person name="Fraser A."/>
            <person name="Garcia J.L."/>
            <person name="Garcia M.J."/>
            <person name="Goble A."/>
            <person name="Goldman G.H."/>
            <person name="Gomi K."/>
            <person name="Griffith-Jones S."/>
            <person name="Gwilliam R."/>
            <person name="Haas B.J."/>
            <person name="Haas H."/>
            <person name="Harris D.E."/>
            <person name="Horiuchi H."/>
            <person name="Huang J."/>
            <person name="Humphray S."/>
            <person name="Jimenez J."/>
            <person name="Keller N."/>
            <person name="Khouri H."/>
            <person name="Kitamoto K."/>
            <person name="Kobayashi T."/>
            <person name="Konzack S."/>
            <person name="Kulkarni R."/>
            <person name="Kumagai T."/>
            <person name="Lafton A."/>
            <person name="Latge J.-P."/>
            <person name="Li W."/>
            <person name="Lord A."/>
            <person name="Lu C."/>
            <person name="Majoros W.H."/>
            <person name="May G.S."/>
            <person name="Miller B.L."/>
            <person name="Mohamoud Y."/>
            <person name="Molina M."/>
            <person name="Monod M."/>
            <person name="Mouyna I."/>
            <person name="Mulligan S."/>
            <person name="Murphy L.D."/>
            <person name="O'Neil S."/>
            <person name="Paulsen I."/>
            <person name="Penalva M.A."/>
            <person name="Pertea M."/>
            <person name="Price C."/>
            <person name="Pritchard B.L."/>
            <person name="Quail M.A."/>
            <person name="Rabbinowitsch E."/>
            <person name="Rawlins N."/>
            <person name="Rajandream M.A."/>
            <person name="Reichard U."/>
            <person name="Renauld H."/>
            <person name="Robson G.D."/>
            <person name="Rodriguez de Cordoba S."/>
            <person name="Rodriguez-Pena J.M."/>
            <person name="Ronning C.M."/>
            <person name="Rutter S."/>
            <person name="Salzberg S.L."/>
            <person name="Sanchez M."/>
            <person name="Sanchez-Ferrero J.C."/>
            <person name="Saunders D."/>
            <person name="Seeger K."/>
            <person name="Squares R."/>
            <person name="Squares S."/>
            <person name="Takeuchi M."/>
            <person name="Tekaia F."/>
            <person name="Turner G."/>
            <person name="Vazquez de Aldana C.R."/>
            <person name="Weidman J."/>
            <person name="White O."/>
            <person name="Woodward J.R."/>
            <person name="Yu J.-H."/>
            <person name="Fraser C.M."/>
            <person name="Galagan J.E."/>
            <person name="Asai K."/>
            <person name="Machida M."/>
            <person name="Hall N."/>
            <person name="Barrell B.G."/>
            <person name="Denning D.W."/>
        </authorList>
    </citation>
    <scope>NUCLEOTIDE SEQUENCE [LARGE SCALE GENOMIC DNA]</scope>
    <source>
        <strain>ATCC MYA-4609 / CBS 101355 / FGSC A1100 / Af293</strain>
    </source>
</reference>
<reference key="2">
    <citation type="journal article" date="2014" name="PLoS Pathog.">
        <title>ChIP-seq and in vivo transcriptome analyses of the Aspergillus fumigatus SREBP SrbA reveals a new regulator of the fungal hypoxia response and virulence.</title>
        <authorList>
            <person name="Chung D."/>
            <person name="Barker B.M."/>
            <person name="Carey C.C."/>
            <person name="Merriman B."/>
            <person name="Werner E.R."/>
            <person name="Lechner B.E."/>
            <person name="Dhingra S."/>
            <person name="Cheng C."/>
            <person name="Xu W."/>
            <person name="Blosser S.J."/>
            <person name="Morohashi K."/>
            <person name="Mazurie A."/>
            <person name="Mitchell T.K."/>
            <person name="Haas H."/>
            <person name="Mitchell A.P."/>
            <person name="Cramer R.A."/>
        </authorList>
    </citation>
    <scope>FUNCTION</scope>
    <scope>DISRUPTION PHENOTYPE</scope>
    <scope>INDUCTION</scope>
</reference>
<organism>
    <name type="scientific">Aspergillus fumigatus (strain ATCC MYA-4609 / CBS 101355 / FGSC A1100 / Af293)</name>
    <name type="common">Neosartorya fumigata</name>
    <dbReference type="NCBI Taxonomy" id="330879"/>
    <lineage>
        <taxon>Eukaryota</taxon>
        <taxon>Fungi</taxon>
        <taxon>Dikarya</taxon>
        <taxon>Ascomycota</taxon>
        <taxon>Pezizomycotina</taxon>
        <taxon>Eurotiomycetes</taxon>
        <taxon>Eurotiomycetidae</taxon>
        <taxon>Eurotiales</taxon>
        <taxon>Aspergillaceae</taxon>
        <taxon>Aspergillus</taxon>
        <taxon>Aspergillus subgen. Fumigati</taxon>
    </lineage>
</organism>
<protein>
    <recommendedName>
        <fullName evidence="5">Transcription factor srbB</fullName>
    </recommendedName>
    <alternativeName>
        <fullName evidence="5">Sterol regulatory element-binding protein B</fullName>
    </alternativeName>
</protein>